<feature type="chain" id="PRO_1000002858" description="Crossover junction endodeoxyribonuclease RuvC">
    <location>
        <begin position="1"/>
        <end position="173"/>
    </location>
</feature>
<feature type="active site" evidence="1">
    <location>
        <position position="8"/>
    </location>
</feature>
<feature type="active site" evidence="1">
    <location>
        <position position="67"/>
    </location>
</feature>
<feature type="active site" evidence="1">
    <location>
        <position position="139"/>
    </location>
</feature>
<feature type="binding site" evidence="1">
    <location>
        <position position="8"/>
    </location>
    <ligand>
        <name>Mg(2+)</name>
        <dbReference type="ChEBI" id="CHEBI:18420"/>
        <label>1</label>
    </ligand>
</feature>
<feature type="binding site" evidence="1">
    <location>
        <position position="67"/>
    </location>
    <ligand>
        <name>Mg(2+)</name>
        <dbReference type="ChEBI" id="CHEBI:18420"/>
        <label>2</label>
    </ligand>
</feature>
<feature type="binding site" evidence="1">
    <location>
        <position position="139"/>
    </location>
    <ligand>
        <name>Mg(2+)</name>
        <dbReference type="ChEBI" id="CHEBI:18420"/>
        <label>1</label>
    </ligand>
</feature>
<evidence type="ECO:0000255" key="1">
    <source>
        <dbReference type="HAMAP-Rule" id="MF_00034"/>
    </source>
</evidence>
<comment type="function">
    <text evidence="1">The RuvA-RuvB-RuvC complex processes Holliday junction (HJ) DNA during genetic recombination and DNA repair. Endonuclease that resolves HJ intermediates. Cleaves cruciform DNA by making single-stranded nicks across the HJ at symmetrical positions within the homologous arms, yielding a 5'-phosphate and a 3'-hydroxyl group; requires a central core of homology in the junction. The consensus cleavage sequence is 5'-(A/T)TT(C/G)-3'. Cleavage occurs on the 3'-side of the TT dinucleotide at the point of strand exchange. HJ branch migration catalyzed by RuvA-RuvB allows RuvC to scan DNA until it finds its consensus sequence, where it cleaves and resolves the cruciform DNA.</text>
</comment>
<comment type="catalytic activity">
    <reaction evidence="1">
        <text>Endonucleolytic cleavage at a junction such as a reciprocal single-stranded crossover between two homologous DNA duplexes (Holliday junction).</text>
        <dbReference type="EC" id="3.1.21.10"/>
    </reaction>
</comment>
<comment type="cofactor">
    <cofactor evidence="1">
        <name>Mg(2+)</name>
        <dbReference type="ChEBI" id="CHEBI:18420"/>
    </cofactor>
    <text evidence="1">Binds 2 Mg(2+) ion per subunit.</text>
</comment>
<comment type="subunit">
    <text evidence="1">Homodimer which binds Holliday junction (HJ) DNA. The HJ becomes 2-fold symmetrical on binding to RuvC with unstacked arms; it has a different conformation from HJ DNA in complex with RuvA. In the full resolvosome a probable DNA-RuvA(4)-RuvB(12)-RuvC(2) complex forms which resolves the HJ.</text>
</comment>
<comment type="subcellular location">
    <subcellularLocation>
        <location evidence="1">Cytoplasm</location>
    </subcellularLocation>
</comment>
<comment type="similarity">
    <text evidence="1">Belongs to the RuvC family.</text>
</comment>
<keyword id="KW-0963">Cytoplasm</keyword>
<keyword id="KW-0227">DNA damage</keyword>
<keyword id="KW-0233">DNA recombination</keyword>
<keyword id="KW-0234">DNA repair</keyword>
<keyword id="KW-0238">DNA-binding</keyword>
<keyword id="KW-0255">Endonuclease</keyword>
<keyword id="KW-0378">Hydrolase</keyword>
<keyword id="KW-0460">Magnesium</keyword>
<keyword id="KW-0479">Metal-binding</keyword>
<keyword id="KW-0540">Nuclease</keyword>
<reference key="1">
    <citation type="submission" date="2007-02" db="EMBL/GenBank/DDBJ databases">
        <title>Complete sequence of chromosome of Yersinia pestis Pestoides F.</title>
        <authorList>
            <consortium name="US DOE Joint Genome Institute"/>
            <person name="Copeland A."/>
            <person name="Lucas S."/>
            <person name="Lapidus A."/>
            <person name="Barry K."/>
            <person name="Detter J.C."/>
            <person name="Glavina del Rio T."/>
            <person name="Hammon N."/>
            <person name="Israni S."/>
            <person name="Dalin E."/>
            <person name="Tice H."/>
            <person name="Pitluck S."/>
            <person name="Di Bartolo G."/>
            <person name="Chain P."/>
            <person name="Malfatti S."/>
            <person name="Shin M."/>
            <person name="Vergez L."/>
            <person name="Schmutz J."/>
            <person name="Larimer F."/>
            <person name="Land M."/>
            <person name="Hauser L."/>
            <person name="Worsham P."/>
            <person name="Chu M."/>
            <person name="Bearden S."/>
            <person name="Garcia E."/>
            <person name="Richardson P."/>
        </authorList>
    </citation>
    <scope>NUCLEOTIDE SEQUENCE [LARGE SCALE GENOMIC DNA]</scope>
    <source>
        <strain>Pestoides F</strain>
    </source>
</reference>
<proteinExistence type="inferred from homology"/>
<gene>
    <name evidence="1" type="primary">ruvC</name>
    <name type="ordered locus">YPDSF_1066</name>
</gene>
<name>RUVC_YERPP</name>
<protein>
    <recommendedName>
        <fullName evidence="1">Crossover junction endodeoxyribonuclease RuvC</fullName>
        <ecNumber evidence="1">3.1.21.10</ecNumber>
    </recommendedName>
    <alternativeName>
        <fullName evidence="1">Holliday junction nuclease RuvC</fullName>
    </alternativeName>
    <alternativeName>
        <fullName evidence="1">Holliday junction resolvase RuvC</fullName>
    </alternativeName>
</protein>
<dbReference type="EC" id="3.1.21.10" evidence="1"/>
<dbReference type="EMBL" id="CP000668">
    <property type="protein sequence ID" value="ABP39464.1"/>
    <property type="molecule type" value="Genomic_DNA"/>
</dbReference>
<dbReference type="RefSeq" id="WP_002211201.1">
    <property type="nucleotide sequence ID" value="NZ_CP009715.1"/>
</dbReference>
<dbReference type="SMR" id="A4TJK2"/>
<dbReference type="GeneID" id="57976605"/>
<dbReference type="KEGG" id="ypp:YPDSF_1066"/>
<dbReference type="PATRIC" id="fig|386656.14.peg.2767"/>
<dbReference type="GO" id="GO:0005737">
    <property type="term" value="C:cytoplasm"/>
    <property type="evidence" value="ECO:0007669"/>
    <property type="project" value="UniProtKB-SubCell"/>
</dbReference>
<dbReference type="GO" id="GO:0048476">
    <property type="term" value="C:Holliday junction resolvase complex"/>
    <property type="evidence" value="ECO:0007669"/>
    <property type="project" value="UniProtKB-UniRule"/>
</dbReference>
<dbReference type="GO" id="GO:0008821">
    <property type="term" value="F:crossover junction DNA endonuclease activity"/>
    <property type="evidence" value="ECO:0007669"/>
    <property type="project" value="UniProtKB-UniRule"/>
</dbReference>
<dbReference type="GO" id="GO:0003677">
    <property type="term" value="F:DNA binding"/>
    <property type="evidence" value="ECO:0007669"/>
    <property type="project" value="UniProtKB-KW"/>
</dbReference>
<dbReference type="GO" id="GO:0000287">
    <property type="term" value="F:magnesium ion binding"/>
    <property type="evidence" value="ECO:0007669"/>
    <property type="project" value="UniProtKB-UniRule"/>
</dbReference>
<dbReference type="GO" id="GO:0006310">
    <property type="term" value="P:DNA recombination"/>
    <property type="evidence" value="ECO:0007669"/>
    <property type="project" value="UniProtKB-UniRule"/>
</dbReference>
<dbReference type="GO" id="GO:0006281">
    <property type="term" value="P:DNA repair"/>
    <property type="evidence" value="ECO:0007669"/>
    <property type="project" value="UniProtKB-UniRule"/>
</dbReference>
<dbReference type="CDD" id="cd16962">
    <property type="entry name" value="RuvC"/>
    <property type="match status" value="1"/>
</dbReference>
<dbReference type="FunFam" id="3.30.420.10:FF:000002">
    <property type="entry name" value="Crossover junction endodeoxyribonuclease RuvC"/>
    <property type="match status" value="1"/>
</dbReference>
<dbReference type="Gene3D" id="3.30.420.10">
    <property type="entry name" value="Ribonuclease H-like superfamily/Ribonuclease H"/>
    <property type="match status" value="1"/>
</dbReference>
<dbReference type="HAMAP" id="MF_00034">
    <property type="entry name" value="RuvC"/>
    <property type="match status" value="1"/>
</dbReference>
<dbReference type="InterPro" id="IPR012337">
    <property type="entry name" value="RNaseH-like_sf"/>
</dbReference>
<dbReference type="InterPro" id="IPR036397">
    <property type="entry name" value="RNaseH_sf"/>
</dbReference>
<dbReference type="InterPro" id="IPR020563">
    <property type="entry name" value="X-over_junc_endoDNase_Mg_BS"/>
</dbReference>
<dbReference type="InterPro" id="IPR002176">
    <property type="entry name" value="X-over_junc_endoDNase_RuvC"/>
</dbReference>
<dbReference type="NCBIfam" id="TIGR00228">
    <property type="entry name" value="ruvC"/>
    <property type="match status" value="1"/>
</dbReference>
<dbReference type="PANTHER" id="PTHR30194">
    <property type="entry name" value="CROSSOVER JUNCTION ENDODEOXYRIBONUCLEASE RUVC"/>
    <property type="match status" value="1"/>
</dbReference>
<dbReference type="PANTHER" id="PTHR30194:SF3">
    <property type="entry name" value="CROSSOVER JUNCTION ENDODEOXYRIBONUCLEASE RUVC"/>
    <property type="match status" value="1"/>
</dbReference>
<dbReference type="Pfam" id="PF02075">
    <property type="entry name" value="RuvC"/>
    <property type="match status" value="1"/>
</dbReference>
<dbReference type="PRINTS" id="PR00696">
    <property type="entry name" value="RSOLVASERUVC"/>
</dbReference>
<dbReference type="SUPFAM" id="SSF53098">
    <property type="entry name" value="Ribonuclease H-like"/>
    <property type="match status" value="1"/>
</dbReference>
<dbReference type="PROSITE" id="PS01321">
    <property type="entry name" value="RUVC"/>
    <property type="match status" value="1"/>
</dbReference>
<organism>
    <name type="scientific">Yersinia pestis (strain Pestoides F)</name>
    <dbReference type="NCBI Taxonomy" id="386656"/>
    <lineage>
        <taxon>Bacteria</taxon>
        <taxon>Pseudomonadati</taxon>
        <taxon>Pseudomonadota</taxon>
        <taxon>Gammaproteobacteria</taxon>
        <taxon>Enterobacterales</taxon>
        <taxon>Yersiniaceae</taxon>
        <taxon>Yersinia</taxon>
    </lineage>
</organism>
<sequence>MAIVLGIDPGSRVTGYGVIRQQGRQLTYLGSGCIRTVVDDMPTRLKLIYAGVTEIITQFQPDFFAIEQVFMAKNPDSALKLGQARGAAIVAAVNLNLPVSEYAARQVKQTVVGTGAAEKSQVQHMVRSLLKLPANPQADAADALAIAITHCHLSQNTLRLGNDQMTLSRGRIR</sequence>
<accession>A4TJK2</accession>